<keyword id="KW-0028">Amino-acid biosynthesis</keyword>
<keyword id="KW-0057">Aromatic amino acid biosynthesis</keyword>
<keyword id="KW-0210">Decarboxylase</keyword>
<keyword id="KW-0456">Lyase</keyword>
<keyword id="KW-1185">Reference proteome</keyword>
<keyword id="KW-0822">Tryptophan biosynthesis</keyword>
<sequence>MILDDLVAATCQNMLARQAQKSLHDLQKEAAHITVSREFPFEKSLAQQKISVVAEIKQASPSKGQIVPSSEFDYQGIAKDYEVAGVDAISVLTEENYFKGSLDILKTVAADSATPVLRKDFTIDPYMIYEAKVAGSQIILLIVAILTDEQLKEYLSLANELGLSVIVEAHNEEEILRAVKANARIIGVNNRNLKDFTVDFDNTKRLRQLVPPEILFISESGIKDRSDVVTLEQIGVDGILVGETFMKAADKLAAIQQLRGEK</sequence>
<feature type="chain" id="PRO_1000018494" description="Indole-3-glycerol phosphate synthase">
    <location>
        <begin position="1"/>
        <end position="262"/>
    </location>
</feature>
<proteinExistence type="inferred from homology"/>
<dbReference type="EC" id="4.1.1.48" evidence="1"/>
<dbReference type="EMBL" id="CP000414">
    <property type="protein sequence ID" value="ABJ62272.1"/>
    <property type="molecule type" value="Genomic_DNA"/>
</dbReference>
<dbReference type="RefSeq" id="WP_011679908.1">
    <property type="nucleotide sequence ID" value="NC_008531.1"/>
</dbReference>
<dbReference type="SMR" id="Q03X00"/>
<dbReference type="EnsemblBacteria" id="ABJ62272">
    <property type="protein sequence ID" value="ABJ62272"/>
    <property type="gene ID" value="LEUM_1174"/>
</dbReference>
<dbReference type="GeneID" id="29576838"/>
<dbReference type="KEGG" id="lme:LEUM_1174"/>
<dbReference type="eggNOG" id="COG0134">
    <property type="taxonomic scope" value="Bacteria"/>
</dbReference>
<dbReference type="HOGENOM" id="CLU_034247_2_0_9"/>
<dbReference type="UniPathway" id="UPA00035">
    <property type="reaction ID" value="UER00043"/>
</dbReference>
<dbReference type="Proteomes" id="UP000000362">
    <property type="component" value="Chromosome"/>
</dbReference>
<dbReference type="GO" id="GO:0004425">
    <property type="term" value="F:indole-3-glycerol-phosphate synthase activity"/>
    <property type="evidence" value="ECO:0007669"/>
    <property type="project" value="UniProtKB-UniRule"/>
</dbReference>
<dbReference type="GO" id="GO:0004640">
    <property type="term" value="F:phosphoribosylanthranilate isomerase activity"/>
    <property type="evidence" value="ECO:0007669"/>
    <property type="project" value="TreeGrafter"/>
</dbReference>
<dbReference type="GO" id="GO:0000162">
    <property type="term" value="P:L-tryptophan biosynthetic process"/>
    <property type="evidence" value="ECO:0007669"/>
    <property type="project" value="UniProtKB-UniRule"/>
</dbReference>
<dbReference type="CDD" id="cd00331">
    <property type="entry name" value="IGPS"/>
    <property type="match status" value="1"/>
</dbReference>
<dbReference type="FunFam" id="3.20.20.70:FF:000024">
    <property type="entry name" value="Indole-3-glycerol phosphate synthase"/>
    <property type="match status" value="1"/>
</dbReference>
<dbReference type="Gene3D" id="3.20.20.70">
    <property type="entry name" value="Aldolase class I"/>
    <property type="match status" value="1"/>
</dbReference>
<dbReference type="HAMAP" id="MF_00134_B">
    <property type="entry name" value="IGPS_B"/>
    <property type="match status" value="1"/>
</dbReference>
<dbReference type="InterPro" id="IPR013785">
    <property type="entry name" value="Aldolase_TIM"/>
</dbReference>
<dbReference type="InterPro" id="IPR045186">
    <property type="entry name" value="Indole-3-glycerol_P_synth"/>
</dbReference>
<dbReference type="InterPro" id="IPR013798">
    <property type="entry name" value="Indole-3-glycerol_P_synth_dom"/>
</dbReference>
<dbReference type="InterPro" id="IPR001468">
    <property type="entry name" value="Indole-3-GlycerolPSynthase_CS"/>
</dbReference>
<dbReference type="InterPro" id="IPR011060">
    <property type="entry name" value="RibuloseP-bd_barrel"/>
</dbReference>
<dbReference type="NCBIfam" id="NF001377">
    <property type="entry name" value="PRK00278.2-4"/>
    <property type="match status" value="1"/>
</dbReference>
<dbReference type="PANTHER" id="PTHR22854:SF2">
    <property type="entry name" value="INDOLE-3-GLYCEROL-PHOSPHATE SYNTHASE"/>
    <property type="match status" value="1"/>
</dbReference>
<dbReference type="PANTHER" id="PTHR22854">
    <property type="entry name" value="TRYPTOPHAN BIOSYNTHESIS PROTEIN"/>
    <property type="match status" value="1"/>
</dbReference>
<dbReference type="Pfam" id="PF00218">
    <property type="entry name" value="IGPS"/>
    <property type="match status" value="1"/>
</dbReference>
<dbReference type="SUPFAM" id="SSF51366">
    <property type="entry name" value="Ribulose-phoshate binding barrel"/>
    <property type="match status" value="1"/>
</dbReference>
<dbReference type="PROSITE" id="PS00614">
    <property type="entry name" value="IGPS"/>
    <property type="match status" value="1"/>
</dbReference>
<name>TRPC_LEUMM</name>
<gene>
    <name evidence="1" type="primary">trpC</name>
    <name type="ordered locus">LEUM_1174</name>
</gene>
<accession>Q03X00</accession>
<organism>
    <name type="scientific">Leuconostoc mesenteroides subsp. mesenteroides (strain ATCC 8293 / DSM 20343 / BCRC 11652 / CCM 1803 / JCM 6124 / NCDO 523 / NBRC 100496 / NCIMB 8023 / NCTC 12954 / NRRL B-1118 / 37Y)</name>
    <dbReference type="NCBI Taxonomy" id="203120"/>
    <lineage>
        <taxon>Bacteria</taxon>
        <taxon>Bacillati</taxon>
        <taxon>Bacillota</taxon>
        <taxon>Bacilli</taxon>
        <taxon>Lactobacillales</taxon>
        <taxon>Lactobacillaceae</taxon>
        <taxon>Leuconostoc</taxon>
    </lineage>
</organism>
<evidence type="ECO:0000255" key="1">
    <source>
        <dbReference type="HAMAP-Rule" id="MF_00134"/>
    </source>
</evidence>
<protein>
    <recommendedName>
        <fullName evidence="1">Indole-3-glycerol phosphate synthase</fullName>
        <shortName evidence="1">IGPS</shortName>
        <ecNumber evidence="1">4.1.1.48</ecNumber>
    </recommendedName>
</protein>
<reference key="1">
    <citation type="journal article" date="2006" name="Proc. Natl. Acad. Sci. U.S.A.">
        <title>Comparative genomics of the lactic acid bacteria.</title>
        <authorList>
            <person name="Makarova K.S."/>
            <person name="Slesarev A."/>
            <person name="Wolf Y.I."/>
            <person name="Sorokin A."/>
            <person name="Mirkin B."/>
            <person name="Koonin E.V."/>
            <person name="Pavlov A."/>
            <person name="Pavlova N."/>
            <person name="Karamychev V."/>
            <person name="Polouchine N."/>
            <person name="Shakhova V."/>
            <person name="Grigoriev I."/>
            <person name="Lou Y."/>
            <person name="Rohksar D."/>
            <person name="Lucas S."/>
            <person name="Huang K."/>
            <person name="Goodstein D.M."/>
            <person name="Hawkins T."/>
            <person name="Plengvidhya V."/>
            <person name="Welker D."/>
            <person name="Hughes J."/>
            <person name="Goh Y."/>
            <person name="Benson A."/>
            <person name="Baldwin K."/>
            <person name="Lee J.-H."/>
            <person name="Diaz-Muniz I."/>
            <person name="Dosti B."/>
            <person name="Smeianov V."/>
            <person name="Wechter W."/>
            <person name="Barabote R."/>
            <person name="Lorca G."/>
            <person name="Altermann E."/>
            <person name="Barrangou R."/>
            <person name="Ganesan B."/>
            <person name="Xie Y."/>
            <person name="Rawsthorne H."/>
            <person name="Tamir D."/>
            <person name="Parker C."/>
            <person name="Breidt F."/>
            <person name="Broadbent J.R."/>
            <person name="Hutkins R."/>
            <person name="O'Sullivan D."/>
            <person name="Steele J."/>
            <person name="Unlu G."/>
            <person name="Saier M.H. Jr."/>
            <person name="Klaenhammer T."/>
            <person name="Richardson P."/>
            <person name="Kozyavkin S."/>
            <person name="Weimer B.C."/>
            <person name="Mills D.A."/>
        </authorList>
    </citation>
    <scope>NUCLEOTIDE SEQUENCE [LARGE SCALE GENOMIC DNA]</scope>
    <source>
        <strain>ATCC 8293 / DSM 20343 / BCRC 11652 / CCM 1803 / JCM 6124 / NCDO 523 / NBRC 100496 / NCIMB 8023 / NCTC 12954 / NRRL B-1118 / 37Y</strain>
    </source>
</reference>
<comment type="catalytic activity">
    <reaction evidence="1">
        <text>1-(2-carboxyphenylamino)-1-deoxy-D-ribulose 5-phosphate + H(+) = (1S,2R)-1-C-(indol-3-yl)glycerol 3-phosphate + CO2 + H2O</text>
        <dbReference type="Rhea" id="RHEA:23476"/>
        <dbReference type="ChEBI" id="CHEBI:15377"/>
        <dbReference type="ChEBI" id="CHEBI:15378"/>
        <dbReference type="ChEBI" id="CHEBI:16526"/>
        <dbReference type="ChEBI" id="CHEBI:58613"/>
        <dbReference type="ChEBI" id="CHEBI:58866"/>
        <dbReference type="EC" id="4.1.1.48"/>
    </reaction>
</comment>
<comment type="pathway">
    <text evidence="1">Amino-acid biosynthesis; L-tryptophan biosynthesis; L-tryptophan from chorismate: step 4/5.</text>
</comment>
<comment type="similarity">
    <text evidence="1">Belongs to the TrpC family.</text>
</comment>